<keyword id="KW-0479">Metal-binding</keyword>
<keyword id="KW-0507">mRNA processing</keyword>
<keyword id="KW-0508">mRNA splicing</keyword>
<keyword id="KW-0539">Nucleus</keyword>
<keyword id="KW-0597">Phosphoprotein</keyword>
<keyword id="KW-1185">Reference proteome</keyword>
<keyword id="KW-0677">Repeat</keyword>
<keyword id="KW-0687">Ribonucleoprotein</keyword>
<keyword id="KW-0694">RNA-binding</keyword>
<keyword id="KW-0747">Spliceosome</keyword>
<keyword id="KW-0862">Zinc</keyword>
<keyword id="KW-0863">Zinc-finger</keyword>
<accession>Q64707</accession>
<gene>
    <name evidence="10" type="primary">Zrsr2-ps1</name>
    <name evidence="8" type="synonym">Sp2</name>
    <name type="synonym">Sp2-7</name>
    <name evidence="8" type="synonym">U2af1-rs1</name>
    <name type="synonym">U2af1l1</name>
    <name evidence="10" type="synonym">Zrsr1</name>
</gene>
<reference key="1">
    <citation type="journal article" date="1993" name="Nucleic Acids Res.">
        <title>A new imprinted gene cloned by a methylation-sensitive genome scanning method.</title>
        <authorList>
            <person name="Hatada I."/>
            <person name="Sugama T."/>
            <person name="Mukai T."/>
        </authorList>
    </citation>
    <scope>NUCLEOTIDE SEQUENCE [MRNA]</scope>
    <source>
        <tissue>Brain</tissue>
    </source>
</reference>
<reference key="2">
    <citation type="journal article" date="1994" name="Nat. Genet.">
        <title>Identification of an imprinted U2af binding protein related sequence on mouse chromosome 11 using the RLGS method.</title>
        <authorList>
            <person name="Hayashizaki Y."/>
            <person name="Shibata H."/>
            <person name="Hirotsune S."/>
            <person name="Sugino H."/>
            <person name="Okazaki Y."/>
            <person name="Sasaki N."/>
            <person name="Hirose K."/>
            <person name="Imoto H."/>
            <person name="Okuizumi H."/>
            <person name="Muramatsu M."/>
            <person name="Komasubara H."/>
            <person name="Shiroishi T."/>
            <person name="Moriwaki K."/>
            <person name="Katsuki M."/>
            <person name="Hatano N."/>
            <person name="Sasaki H."/>
            <person name="Ueda T."/>
            <person name="Mise N."/>
            <person name="Takagi N."/>
            <person name="Plass C."/>
            <person name="Chapman V.M."/>
        </authorList>
    </citation>
    <scope>NUCLEOTIDE SEQUENCE [MRNA]</scope>
    <source>
        <strain>PWK</strain>
        <tissue>Liver</tissue>
    </source>
</reference>
<reference key="3">
    <citation type="journal article" date="1995" name="Nucleic Acids Res.">
        <title>Allele-specific methylation and expression of an imprinted U2af1-rs1 (SP2) gene.</title>
        <authorList>
            <person name="Hatada I."/>
            <person name="Kitagawa K."/>
            <person name="Yamaoka T."/>
            <person name="Wang X."/>
            <person name="Arai Y."/>
            <person name="Hashido K."/>
            <person name="Ohishi S."/>
            <person name="Masuda J."/>
            <person name="Ogata J."/>
            <person name="Mukai T."/>
        </authorList>
    </citation>
    <scope>NUCLEOTIDE SEQUENCE [GENOMIC DNA]</scope>
    <scope>MATERNAL IMPRINTING</scope>
    <source>
        <tissue>Liver</tissue>
    </source>
</reference>
<reference key="4">
    <citation type="journal article" date="2000" name="Biochem. Biophys. Res. Commun.">
        <title>The oocyte-specific methylated region of the U2afbp-rs/U2af1-rs1 gene is dispensable for its imprinted methylation.</title>
        <authorList>
            <person name="Sunahara S."/>
            <person name="Nakamura K."/>
            <person name="Nakao K."/>
            <person name="Gondo Y."/>
            <person name="Nagata Y."/>
            <person name="Katsuki M."/>
        </authorList>
    </citation>
    <scope>DISRUPTION PHENOTYPE</scope>
</reference>
<reference key="5">
    <citation type="journal article" date="2010" name="Cell">
        <title>A tissue-specific atlas of mouse protein phosphorylation and expression.</title>
        <authorList>
            <person name="Huttlin E.L."/>
            <person name="Jedrychowski M.P."/>
            <person name="Elias J.E."/>
            <person name="Goswami T."/>
            <person name="Rad R."/>
            <person name="Beausoleil S.A."/>
            <person name="Villen J."/>
            <person name="Haas W."/>
            <person name="Sowa M.E."/>
            <person name="Gygi S.P."/>
        </authorList>
    </citation>
    <scope>PHOSPHORYLATION [LARGE SCALE ANALYSIS] AT SER-50</scope>
    <scope>IDENTIFICATION BY MASS SPECTROMETRY [LARGE SCALE ANALYSIS]</scope>
    <source>
        <tissue>Brain</tissue>
        <tissue>Kidney</tissue>
        <tissue>Spleen</tissue>
    </source>
</reference>
<reference key="6">
    <citation type="journal article" date="2018" name="Cell Rep.">
        <title>Impaired spermatogenesis, muscle, and erythrocyte function in U12 intron splicing-defective zrsr1 mutant mice.</title>
        <authorList>
            <person name="Horiuchi K."/>
            <person name="Perez-Cerezales S."/>
            <person name="Papasaikas P."/>
            <person name="Ramos-Ibeas P."/>
            <person name="Lopez-Cardona A.P."/>
            <person name="Laguna-Barraza R."/>
            <person name="Fonseca Balvis N."/>
            <person name="Pericuesta E."/>
            <person name="Fernandez-Gonzalez R."/>
            <person name="Planells B."/>
            <person name="Viera A."/>
            <person name="Suja J.A."/>
            <person name="Ross P.J."/>
            <person name="Alen F."/>
            <person name="Orio L."/>
            <person name="Rodriguez de Fonseca F."/>
            <person name="Pintado B."/>
            <person name="Valcarcel J."/>
            <person name="Gutierrez-Adan A."/>
        </authorList>
    </citation>
    <scope>FUNCTION</scope>
    <scope>DEVELOPMENTAL STAGE</scope>
    <scope>TISSUE SPECIFICITY</scope>
    <scope>INTERACTION WITH SF3B1 AND ZCRB1</scope>
</reference>
<feature type="chain" id="PRO_0000082000" description="U2 small nuclear ribonucleoprotein auxiliary factor 35 kDa subunit-related protein 2-like">
    <location>
        <begin position="1"/>
        <end position="428"/>
    </location>
</feature>
<feature type="domain" description="RRM" evidence="2">
    <location>
        <begin position="189"/>
        <end position="295"/>
    </location>
</feature>
<feature type="zinc finger region" description="C3H1-type 1" evidence="3">
    <location>
        <begin position="157"/>
        <end position="185"/>
    </location>
</feature>
<feature type="zinc finger region" description="C3H1-type 2" evidence="3">
    <location>
        <begin position="297"/>
        <end position="324"/>
    </location>
</feature>
<feature type="region of interest" description="Disordered" evidence="4">
    <location>
        <begin position="1"/>
        <end position="51"/>
    </location>
</feature>
<feature type="region of interest" description="Disordered" evidence="4">
    <location>
        <begin position="339"/>
        <end position="428"/>
    </location>
</feature>
<feature type="compositionally biased region" description="Basic residues" evidence="4">
    <location>
        <begin position="23"/>
        <end position="35"/>
    </location>
</feature>
<feature type="compositionally biased region" description="Acidic residues" evidence="4">
    <location>
        <begin position="42"/>
        <end position="51"/>
    </location>
</feature>
<feature type="compositionally biased region" description="Basic and acidic residues" evidence="4">
    <location>
        <begin position="351"/>
        <end position="366"/>
    </location>
</feature>
<feature type="compositionally biased region" description="Low complexity" evidence="4">
    <location>
        <begin position="367"/>
        <end position="377"/>
    </location>
</feature>
<feature type="compositionally biased region" description="Basic residues" evidence="4">
    <location>
        <begin position="389"/>
        <end position="410"/>
    </location>
</feature>
<feature type="compositionally biased region" description="Polar residues" evidence="4">
    <location>
        <begin position="419"/>
        <end position="428"/>
    </location>
</feature>
<feature type="modified residue" description="Phosphoserine" evidence="11">
    <location>
        <position position="50"/>
    </location>
</feature>
<feature type="modified residue" description="Phosphoserine" evidence="1">
    <location>
        <position position="340"/>
    </location>
</feature>
<feature type="modified residue" description="Phosphoserine" evidence="1">
    <location>
        <position position="375"/>
    </location>
</feature>
<feature type="sequence conflict" description="In Ref. 2; AAB30301." evidence="9" ref="2">
    <original>N</original>
    <variation>S</variation>
    <location>
        <position position="351"/>
    </location>
</feature>
<organism>
    <name type="scientific">Mus musculus</name>
    <name type="common">Mouse</name>
    <dbReference type="NCBI Taxonomy" id="10090"/>
    <lineage>
        <taxon>Eukaryota</taxon>
        <taxon>Metazoa</taxon>
        <taxon>Chordata</taxon>
        <taxon>Craniata</taxon>
        <taxon>Vertebrata</taxon>
        <taxon>Euteleostomi</taxon>
        <taxon>Mammalia</taxon>
        <taxon>Eutheria</taxon>
        <taxon>Euarchontoglires</taxon>
        <taxon>Glires</taxon>
        <taxon>Rodentia</taxon>
        <taxon>Myomorpha</taxon>
        <taxon>Muroidea</taxon>
        <taxon>Muridae</taxon>
        <taxon>Murinae</taxon>
        <taxon>Mus</taxon>
        <taxon>Mus</taxon>
    </lineage>
</organism>
<evidence type="ECO:0000250" key="1">
    <source>
        <dbReference type="UniProtKB" id="Q15696"/>
    </source>
</evidence>
<evidence type="ECO:0000255" key="2">
    <source>
        <dbReference type="PROSITE-ProRule" id="PRU00176"/>
    </source>
</evidence>
<evidence type="ECO:0000255" key="3">
    <source>
        <dbReference type="PROSITE-ProRule" id="PRU00723"/>
    </source>
</evidence>
<evidence type="ECO:0000256" key="4">
    <source>
        <dbReference type="SAM" id="MobiDB-lite"/>
    </source>
</evidence>
<evidence type="ECO:0000269" key="5">
    <source>
    </source>
</evidence>
<evidence type="ECO:0000269" key="6">
    <source>
    </source>
</evidence>
<evidence type="ECO:0000269" key="7">
    <source>
    </source>
</evidence>
<evidence type="ECO:0000303" key="8">
    <source>
    </source>
</evidence>
<evidence type="ECO:0000305" key="9"/>
<evidence type="ECO:0000312" key="10">
    <source>
        <dbReference type="MGI" id="MGI:98885"/>
    </source>
</evidence>
<evidence type="ECO:0007744" key="11">
    <source>
    </source>
</evidence>
<proteinExistence type="evidence at protein level"/>
<name>U2AFL_MOUSE</name>
<comment type="function">
    <text evidence="6">Plays a role in splicing of the U12-type introns (PubMed:29617656). Implicated also in removal of U2 introns positioned adjacent to a U12 intron (PubMed:29617656).</text>
</comment>
<comment type="subunit">
    <text evidence="6">Interacts with SF3B1 (PubMed:29617656). Interacts with ZCRB1 (PubMed:29617656).</text>
</comment>
<comment type="subcellular location">
    <subcellularLocation>
        <location>Nucleus</location>
    </subcellularLocation>
</comment>
<comment type="tissue specificity">
    <text evidence="6">Highest expression levels are detected in the brain, and lower expression levels in other tissues like epididymis, testis, bone marrow or muscle (PubMed:29617656). In testis, expressed in both Sertoli and spermatogenic cell (PubMed:29617656).</text>
</comment>
<comment type="developmental stage">
    <text evidence="6">Expressed at the 2-cell stage, and at the morula and blastocyst stages.</text>
</comment>
<comment type="disruption phenotype">
    <text evidence="5">No visible phenotype, possibly because of the compensating effects of one or more of the other 3 paralogs (U2AF1, U2AF1L4, ZRSR2).</text>
</comment>
<comment type="miscellaneous">
    <text evidence="7">Maternally imprinted. Active paternal allele is unmethylated whereas the inactive maternal allele is highly methylated.</text>
</comment>
<comment type="caution">
    <text evidence="9">Defined as a pseudogene by MGI. However, proteomics data suggest the existence of the protein.</text>
</comment>
<protein>
    <recommendedName>
        <fullName evidence="9">U2 small nuclear ribonucleoprotein auxiliary factor 35 kDa subunit-related protein 2-like</fullName>
    </recommendedName>
    <alternativeName>
        <fullName>CCCH type zinc finger, RNA-binding motif and serine/arginine rich protein 1</fullName>
    </alternativeName>
    <alternativeName>
        <fullName>SP2</fullName>
    </alternativeName>
    <alternativeName>
        <fullName>U2 small nuclear ribonucleoprotein auxiliary factor 35 kDa subunit-related protein 1</fullName>
    </alternativeName>
    <alternativeName>
        <fullName>U2(RNU2) small nuclear RNA auxiliary factor 1-like 1</fullName>
    </alternativeName>
</protein>
<dbReference type="EMBL" id="D17407">
    <property type="protein sequence ID" value="BAA04230.1"/>
    <property type="molecule type" value="mRNA"/>
</dbReference>
<dbReference type="EMBL" id="S69507">
    <property type="protein sequence ID" value="AAB30301.1"/>
    <property type="molecule type" value="mRNA"/>
</dbReference>
<dbReference type="EMBL" id="D26474">
    <property type="protein sequence ID" value="BAA05486.1"/>
    <property type="molecule type" value="Genomic_DNA"/>
</dbReference>
<dbReference type="PIR" id="S41485">
    <property type="entry name" value="S41485"/>
</dbReference>
<dbReference type="RefSeq" id="NP_035793.1">
    <property type="nucleotide sequence ID" value="NM_011663.3"/>
</dbReference>
<dbReference type="SMR" id="Q64707"/>
<dbReference type="FunCoup" id="Q64707">
    <property type="interactions" value="100"/>
</dbReference>
<dbReference type="STRING" id="10090.ENSMUSP00000062025"/>
<dbReference type="iPTMnet" id="Q64707"/>
<dbReference type="PhosphoSitePlus" id="Q64707"/>
<dbReference type="PaxDb" id="10090-ENSMUSP00000062025"/>
<dbReference type="PeptideAtlas" id="Q64707"/>
<dbReference type="ProteomicsDB" id="297690"/>
<dbReference type="Pumba" id="Q64707"/>
<dbReference type="Antibodypedia" id="8950">
    <property type="antibodies" value="100 antibodies from 21 providers"/>
</dbReference>
<dbReference type="DNASU" id="22183"/>
<dbReference type="UCSC" id="uc007iem.2">
    <property type="organism name" value="mouse"/>
</dbReference>
<dbReference type="AGR" id="MGI:98885"/>
<dbReference type="MGI" id="MGI:98885">
    <property type="gene designation" value="Zrsr2-ps1"/>
</dbReference>
<dbReference type="VEuPathDB" id="HostDB:ENSMUSG00000044068"/>
<dbReference type="eggNOG" id="KOG2202">
    <property type="taxonomic scope" value="Eukaryota"/>
</dbReference>
<dbReference type="HOGENOM" id="CLU_029117_1_0_1"/>
<dbReference type="InParanoid" id="Q64707"/>
<dbReference type="OMA" id="RKCPKGN"/>
<dbReference type="OrthoDB" id="75923at2759"/>
<dbReference type="PhylomeDB" id="Q64707"/>
<dbReference type="TreeFam" id="TF324447"/>
<dbReference type="BioGRID-ORCS" id="22183">
    <property type="hits" value="4 hits in 78 CRISPR screens"/>
</dbReference>
<dbReference type="ChiTaRS" id="Sp2">
    <property type="organism name" value="mouse"/>
</dbReference>
<dbReference type="PRO" id="PR:Q64707"/>
<dbReference type="Proteomes" id="UP000000589">
    <property type="component" value="Chromosome 11"/>
</dbReference>
<dbReference type="RNAct" id="Q64707">
    <property type="molecule type" value="protein"/>
</dbReference>
<dbReference type="Bgee" id="ENSMUSG00000044068">
    <property type="expression patterns" value="Expressed in retinal neural layer and 255 other cell types or tissues"/>
</dbReference>
<dbReference type="ExpressionAtlas" id="Q64707">
    <property type="expression patterns" value="baseline and differential"/>
</dbReference>
<dbReference type="GO" id="GO:0005681">
    <property type="term" value="C:spliceosomal complex"/>
    <property type="evidence" value="ECO:0000315"/>
    <property type="project" value="UniProtKB"/>
</dbReference>
<dbReference type="GO" id="GO:0005689">
    <property type="term" value="C:U12-type spliceosomal complex"/>
    <property type="evidence" value="ECO:0000315"/>
    <property type="project" value="UniProtKB"/>
</dbReference>
<dbReference type="GO" id="GO:0089701">
    <property type="term" value="C:U2AF complex"/>
    <property type="evidence" value="ECO:0007669"/>
    <property type="project" value="InterPro"/>
</dbReference>
<dbReference type="GO" id="GO:0003723">
    <property type="term" value="F:RNA binding"/>
    <property type="evidence" value="ECO:0007669"/>
    <property type="project" value="UniProtKB-KW"/>
</dbReference>
<dbReference type="GO" id="GO:0008270">
    <property type="term" value="F:zinc ion binding"/>
    <property type="evidence" value="ECO:0007669"/>
    <property type="project" value="UniProtKB-KW"/>
</dbReference>
<dbReference type="GO" id="GO:0000398">
    <property type="term" value="P:mRNA splicing, via spliceosome"/>
    <property type="evidence" value="ECO:0000315"/>
    <property type="project" value="UniProtKB"/>
</dbReference>
<dbReference type="CDD" id="cd12540">
    <property type="entry name" value="RRM_U2AFBPL"/>
    <property type="match status" value="1"/>
</dbReference>
<dbReference type="FunFam" id="3.30.70.330:FF:000209">
    <property type="entry name" value="U2 small nuclear ribonucleoprotein auxiliary factor 35 kDa subunit-related protein 2"/>
    <property type="match status" value="1"/>
</dbReference>
<dbReference type="Gene3D" id="3.30.70.330">
    <property type="match status" value="1"/>
</dbReference>
<dbReference type="InterPro" id="IPR012677">
    <property type="entry name" value="Nucleotide-bd_a/b_plait_sf"/>
</dbReference>
<dbReference type="InterPro" id="IPR035979">
    <property type="entry name" value="RBD_domain_sf"/>
</dbReference>
<dbReference type="InterPro" id="IPR000504">
    <property type="entry name" value="RRM_dom"/>
</dbReference>
<dbReference type="InterPro" id="IPR003954">
    <property type="entry name" value="RRM_dom_euk"/>
</dbReference>
<dbReference type="InterPro" id="IPR009145">
    <property type="entry name" value="U2AF_small"/>
</dbReference>
<dbReference type="InterPro" id="IPR000571">
    <property type="entry name" value="Znf_CCCH"/>
</dbReference>
<dbReference type="PANTHER" id="PTHR12620">
    <property type="entry name" value="U2 SNRNP AUXILIARY FACTOR, SMALL SUBUNIT"/>
    <property type="match status" value="1"/>
</dbReference>
<dbReference type="Pfam" id="PF00076">
    <property type="entry name" value="RRM_1"/>
    <property type="match status" value="1"/>
</dbReference>
<dbReference type="Pfam" id="PF00642">
    <property type="entry name" value="zf-CCCH"/>
    <property type="match status" value="1"/>
</dbReference>
<dbReference type="PRINTS" id="PR01848">
    <property type="entry name" value="U2AUXFACTOR"/>
</dbReference>
<dbReference type="SMART" id="SM00361">
    <property type="entry name" value="RRM_1"/>
    <property type="match status" value="1"/>
</dbReference>
<dbReference type="SMART" id="SM00356">
    <property type="entry name" value="ZnF_C3H1"/>
    <property type="match status" value="2"/>
</dbReference>
<dbReference type="SUPFAM" id="SSF54928">
    <property type="entry name" value="RNA-binding domain, RBD"/>
    <property type="match status" value="1"/>
</dbReference>
<dbReference type="PROSITE" id="PS50102">
    <property type="entry name" value="RRM"/>
    <property type="match status" value="1"/>
</dbReference>
<dbReference type="PROSITE" id="PS50103">
    <property type="entry name" value="ZF_C3H1"/>
    <property type="match status" value="2"/>
</dbReference>
<sequence>MASRQTAIPEKLSRKQYKAAMKKEKRKKRRQKMARLRALEAPPEEDDDVSANEELAERLLEIERQRLHEEWLLREEKAQEEFRIKKKKEEAARKQKEEQERQIKAEWEEQQKKQREEEEQKLQEKREREEAVQKMLDQAENERIWQNPEPPKDLRLEKYRPSCPFYNKTGACRFGNRCSRKHDFPTSSPTLLVKSMFTTFGMEQCRRDDYDSDANLEYSEEETYQQFLDFYHDVLPEFKNVGKVIQFKVSCNLEPHLRGNVYVQYQSEEECQAALSLFNGRWYAGRQLQCEFCPVTRWKVAICGLFEMQKCPKGKHCNFLHVFRNPNNEFREANRDIYMSPPAWTGSSGKNSDRRERKDHHEEYYSKSRSYHSGSYHSSKRNRESERKSPHRWKKSHKQTTKSHERHSSRRGREEDSSPGPQSQSHRT</sequence>